<dbReference type="EMBL" id="CP000804">
    <property type="protein sequence ID" value="ABU57758.1"/>
    <property type="molecule type" value="Genomic_DNA"/>
</dbReference>
<dbReference type="RefSeq" id="WP_012120186.1">
    <property type="nucleotide sequence ID" value="NC_009767.1"/>
</dbReference>
<dbReference type="SMR" id="A7NJT8"/>
<dbReference type="STRING" id="383372.Rcas_1666"/>
<dbReference type="KEGG" id="rca:Rcas_1666"/>
<dbReference type="eggNOG" id="COG0228">
    <property type="taxonomic scope" value="Bacteria"/>
</dbReference>
<dbReference type="HOGENOM" id="CLU_100590_5_0_0"/>
<dbReference type="OrthoDB" id="9807878at2"/>
<dbReference type="Proteomes" id="UP000000263">
    <property type="component" value="Chromosome"/>
</dbReference>
<dbReference type="GO" id="GO:0005737">
    <property type="term" value="C:cytoplasm"/>
    <property type="evidence" value="ECO:0007669"/>
    <property type="project" value="UniProtKB-ARBA"/>
</dbReference>
<dbReference type="GO" id="GO:0015935">
    <property type="term" value="C:small ribosomal subunit"/>
    <property type="evidence" value="ECO:0007669"/>
    <property type="project" value="TreeGrafter"/>
</dbReference>
<dbReference type="GO" id="GO:0003735">
    <property type="term" value="F:structural constituent of ribosome"/>
    <property type="evidence" value="ECO:0007669"/>
    <property type="project" value="InterPro"/>
</dbReference>
<dbReference type="GO" id="GO:0006412">
    <property type="term" value="P:translation"/>
    <property type="evidence" value="ECO:0007669"/>
    <property type="project" value="UniProtKB-UniRule"/>
</dbReference>
<dbReference type="Gene3D" id="3.30.1320.10">
    <property type="match status" value="1"/>
</dbReference>
<dbReference type="HAMAP" id="MF_00385">
    <property type="entry name" value="Ribosomal_bS16"/>
    <property type="match status" value="1"/>
</dbReference>
<dbReference type="InterPro" id="IPR000307">
    <property type="entry name" value="Ribosomal_bS16"/>
</dbReference>
<dbReference type="InterPro" id="IPR023803">
    <property type="entry name" value="Ribosomal_bS16_dom_sf"/>
</dbReference>
<dbReference type="NCBIfam" id="TIGR00002">
    <property type="entry name" value="S16"/>
    <property type="match status" value="1"/>
</dbReference>
<dbReference type="PANTHER" id="PTHR12919">
    <property type="entry name" value="30S RIBOSOMAL PROTEIN S16"/>
    <property type="match status" value="1"/>
</dbReference>
<dbReference type="PANTHER" id="PTHR12919:SF20">
    <property type="entry name" value="SMALL RIBOSOMAL SUBUNIT PROTEIN BS16M"/>
    <property type="match status" value="1"/>
</dbReference>
<dbReference type="Pfam" id="PF00886">
    <property type="entry name" value="Ribosomal_S16"/>
    <property type="match status" value="1"/>
</dbReference>
<dbReference type="SUPFAM" id="SSF54565">
    <property type="entry name" value="Ribosomal protein S16"/>
    <property type="match status" value="1"/>
</dbReference>
<organism>
    <name type="scientific">Roseiflexus castenholzii (strain DSM 13941 / HLO8)</name>
    <dbReference type="NCBI Taxonomy" id="383372"/>
    <lineage>
        <taxon>Bacteria</taxon>
        <taxon>Bacillati</taxon>
        <taxon>Chloroflexota</taxon>
        <taxon>Chloroflexia</taxon>
        <taxon>Chloroflexales</taxon>
        <taxon>Roseiflexineae</taxon>
        <taxon>Roseiflexaceae</taxon>
        <taxon>Roseiflexus</taxon>
    </lineage>
</organism>
<gene>
    <name evidence="1" type="primary">rpsP</name>
    <name type="ordered locus">Rcas_1666</name>
</gene>
<comment type="similarity">
    <text evidence="1">Belongs to the bacterial ribosomal protein bS16 family.</text>
</comment>
<protein>
    <recommendedName>
        <fullName evidence="1">Small ribosomal subunit protein bS16</fullName>
    </recommendedName>
    <alternativeName>
        <fullName evidence="2">30S ribosomal protein S16</fullName>
    </alternativeName>
</protein>
<accession>A7NJT8</accession>
<feature type="chain" id="PRO_1000080165" description="Small ribosomal subunit protein bS16">
    <location>
        <begin position="1"/>
        <end position="93"/>
    </location>
</feature>
<sequence length="93" mass="10389">MVTIRLRRTGKTKKPSYRLVVADSRAPRDGRFIEIVGHYNPVRQPKELNVKADRVRYWLGVGAQPSETVVRLLKQVGVLDADGKPAPVTPIEG</sequence>
<reference key="1">
    <citation type="submission" date="2007-08" db="EMBL/GenBank/DDBJ databases">
        <title>Complete sequence of Roseiflexus castenholzii DSM 13941.</title>
        <authorList>
            <consortium name="US DOE Joint Genome Institute"/>
            <person name="Copeland A."/>
            <person name="Lucas S."/>
            <person name="Lapidus A."/>
            <person name="Barry K."/>
            <person name="Glavina del Rio T."/>
            <person name="Dalin E."/>
            <person name="Tice H."/>
            <person name="Pitluck S."/>
            <person name="Thompson L.S."/>
            <person name="Brettin T."/>
            <person name="Bruce D."/>
            <person name="Detter J.C."/>
            <person name="Han C."/>
            <person name="Tapia R."/>
            <person name="Schmutz J."/>
            <person name="Larimer F."/>
            <person name="Land M."/>
            <person name="Hauser L."/>
            <person name="Kyrpides N."/>
            <person name="Mikhailova N."/>
            <person name="Bryant D.A."/>
            <person name="Hanada S."/>
            <person name="Tsukatani Y."/>
            <person name="Richardson P."/>
        </authorList>
    </citation>
    <scope>NUCLEOTIDE SEQUENCE [LARGE SCALE GENOMIC DNA]</scope>
    <source>
        <strain>DSM 13941 / HLO8</strain>
    </source>
</reference>
<evidence type="ECO:0000255" key="1">
    <source>
        <dbReference type="HAMAP-Rule" id="MF_00385"/>
    </source>
</evidence>
<evidence type="ECO:0000305" key="2"/>
<keyword id="KW-1185">Reference proteome</keyword>
<keyword id="KW-0687">Ribonucleoprotein</keyword>
<keyword id="KW-0689">Ribosomal protein</keyword>
<proteinExistence type="inferred from homology"/>
<name>RS16_ROSCS</name>